<name>ECTP_CORGL</name>
<feature type="chain" id="PRO_0000441731" description="Ectoine/glycine betaine/proline transporter EctP">
    <location>
        <begin position="1"/>
        <end position="615"/>
    </location>
</feature>
<feature type="transmembrane region" description="Helical" evidence="1">
    <location>
        <begin position="24"/>
        <end position="44"/>
    </location>
</feature>
<feature type="transmembrane region" description="Helical" evidence="1">
    <location>
        <begin position="62"/>
        <end position="82"/>
    </location>
</feature>
<feature type="transmembrane region" description="Helical" evidence="1">
    <location>
        <begin position="102"/>
        <end position="122"/>
    </location>
</feature>
<feature type="transmembrane region" description="Helical" evidence="1">
    <location>
        <begin position="156"/>
        <end position="176"/>
    </location>
</feature>
<feature type="transmembrane region" description="Helical" evidence="1">
    <location>
        <begin position="207"/>
        <end position="227"/>
    </location>
</feature>
<feature type="transmembrane region" description="Helical" evidence="1">
    <location>
        <begin position="240"/>
        <end position="260"/>
    </location>
</feature>
<feature type="transmembrane region" description="Helical" evidence="1">
    <location>
        <begin position="275"/>
        <end position="295"/>
    </location>
</feature>
<feature type="transmembrane region" description="Helical" evidence="1">
    <location>
        <begin position="329"/>
        <end position="349"/>
    </location>
</feature>
<feature type="transmembrane region" description="Helical" evidence="1">
    <location>
        <begin position="360"/>
        <end position="380"/>
    </location>
</feature>
<feature type="transmembrane region" description="Helical" evidence="1">
    <location>
        <begin position="417"/>
        <end position="437"/>
    </location>
</feature>
<feature type="transmembrane region" description="Helical" evidence="1">
    <location>
        <begin position="463"/>
        <end position="483"/>
    </location>
</feature>
<feature type="transmembrane region" description="Helical" evidence="1">
    <location>
        <begin position="489"/>
        <end position="509"/>
    </location>
</feature>
<feature type="region of interest" description="Disordered" evidence="2">
    <location>
        <begin position="524"/>
        <end position="562"/>
    </location>
</feature>
<feature type="region of interest" description="Disordered" evidence="2">
    <location>
        <begin position="589"/>
        <end position="615"/>
    </location>
</feature>
<feature type="compositionally biased region" description="Basic and acidic residues" evidence="2">
    <location>
        <begin position="526"/>
        <end position="540"/>
    </location>
</feature>
<feature type="compositionally biased region" description="Basic and acidic residues" evidence="2">
    <location>
        <begin position="600"/>
        <end position="615"/>
    </location>
</feature>
<gene>
    <name evidence="6" type="primary">ectP</name>
    <name evidence="8" type="ordered locus">Cgl2312</name>
</gene>
<sequence length="615" mass="67403">MSSNIAITTEPEGKNKKGLKSDPFIFSISVGFIVVFVIATIALGEKARTTFSAIAGWLLENLGWMYIGGVSLVFIFLMGIFASRYGRVKLGDDDDDPEHTLIVWFCMLFAGGVGAVLMFWGVAEPINHAFNVPMANEESMSEAAIVQAFAYTFYHFGIHMWVIMALPGLSLGYFIYKRKLPPRLSSVFSPILGKHIYSTPGKLIDVLAIVGTTFGIAVSVGLGVLQINAGMNKLWSTPQVSWVQLLIILIITAVACISVASGLDKGIKLLSNINIAMAVALMFFILFTGPTLTLLRFLVESFGIYASWMPNLMFWTDSFQDNPGWQGKWTVFYWAWTICWSPYVGMFVARISRGRTVREFIGGVLALPAIFGVVWFSIFGRAGIEVELSNPGFLTQPTVVEGDVPAALFNVLQEYPLTGIVSAFALVIIVIFFITSIDSAALVNDMFATGAENQTPTSYRVMWACTIGAVAGSLLIISPSSGIATLQEVVIIVAFPFFLVQFVMMFSLLKGMSEDAAAVRRVQTRQWEKTDTPEKLEEHSSQPAPGYDDEGNPLPMPALEHDEDGNIVIPGNVVIEGDLGVVGDVVDDPEEAQEMGSRFKIVEQTRPQSRDEYDI</sequence>
<keyword id="KW-0029">Amino-acid transport</keyword>
<keyword id="KW-1003">Cell membrane</keyword>
<keyword id="KW-0406">Ion transport</keyword>
<keyword id="KW-0472">Membrane</keyword>
<keyword id="KW-1185">Reference proteome</keyword>
<keyword id="KW-0915">Sodium</keyword>
<keyword id="KW-0739">Sodium transport</keyword>
<keyword id="KW-0346">Stress response</keyword>
<keyword id="KW-0769">Symport</keyword>
<keyword id="KW-0812">Transmembrane</keyword>
<keyword id="KW-1133">Transmembrane helix</keyword>
<keyword id="KW-0813">Transport</keyword>
<evidence type="ECO:0000255" key="1"/>
<evidence type="ECO:0000256" key="2">
    <source>
        <dbReference type="SAM" id="MobiDB-lite"/>
    </source>
</evidence>
<evidence type="ECO:0000269" key="3">
    <source>
    </source>
</evidence>
<evidence type="ECO:0000269" key="4">
    <source>
    </source>
</evidence>
<evidence type="ECO:0000269" key="5">
    <source>
    </source>
</evidence>
<evidence type="ECO:0000303" key="6">
    <source>
    </source>
</evidence>
<evidence type="ECO:0000305" key="7"/>
<evidence type="ECO:0000312" key="8">
    <source>
        <dbReference type="EMBL" id="BAB99705.1"/>
    </source>
</evidence>
<protein>
    <recommendedName>
        <fullName evidence="7">Ectoine/glycine betaine/proline transporter EctP</fullName>
    </recommendedName>
</protein>
<proteinExistence type="evidence at protein level"/>
<comment type="function">
    <text evidence="5">Involved in the uptake of osmoprotectants. Can transport ectoine, proline and glycine betaine. Na(+) is probably the coupling ion.</text>
</comment>
<comment type="biophysicochemical properties">
    <kinetics>
        <KM evidence="5">63 uM for ectoine</KM>
        <KM evidence="5">333 uM for glycine betaine</KM>
        <KM evidence="5">1200 uM for proline</KM>
        <KM evidence="5">9100 uM for Na(+)</KM>
        <Vmax evidence="5">27.0 nmol/min/mg enzyme with ectoine as substrate</Vmax>
        <Vmax evidence="5">34.0 nmol/min/mg enzyme with glycine betaine as substrate</Vmax>
        <Vmax evidence="5">34.0 nmol/min/mg enzyme with proline as substrate</Vmax>
    </kinetics>
    <temperatureDependence>
        <text evidence="3">Optimum temperature is 25 degrees Celsius (irrespective of the state of osmotic stimulation).</text>
    </temperatureDependence>
</comment>
<comment type="subcellular location">
    <subcellularLocation>
        <location evidence="4">Cell membrane</location>
        <topology evidence="1">Multi-pass membrane protein</topology>
    </subcellularLocation>
</comment>
<comment type="induction">
    <text evidence="4 5">Constitutively expressed (PubMed:9811661). Induced upon hyperosmotic conditions, but the already high maximal uptake capacity is not further elevated, indicating that the amount of EctP is not changed (PubMed:17390131).</text>
</comment>
<comment type="similarity">
    <text evidence="7">Belongs to the BCCT transporter (TC 2.A.15) family.</text>
</comment>
<accession>Q79VE0</accession>
<accession>H7C678</accession>
<accession>O86143</accession>
<dbReference type="EMBL" id="AJ001436">
    <property type="protein sequence ID" value="CAA04760.1"/>
    <property type="molecule type" value="Genomic_DNA"/>
</dbReference>
<dbReference type="EMBL" id="BA000036">
    <property type="protein sequence ID" value="BAB99705.1"/>
    <property type="molecule type" value="Genomic_DNA"/>
</dbReference>
<dbReference type="RefSeq" id="NP_601511.1">
    <property type="nucleotide sequence ID" value="NC_003450.3"/>
</dbReference>
<dbReference type="RefSeq" id="WP_011015032.1">
    <property type="nucleotide sequence ID" value="NC_006958.1"/>
</dbReference>
<dbReference type="SMR" id="Q79VE0"/>
<dbReference type="STRING" id="196627.cg2539"/>
<dbReference type="TCDB" id="2.A.15.1.2">
    <property type="family name" value="the betaine/carnitine/choline transporter (bcct) family"/>
</dbReference>
<dbReference type="KEGG" id="cgb:cg2539"/>
<dbReference type="KEGG" id="cgl:Cgl2312"/>
<dbReference type="PATRIC" id="fig|1718.43.peg.2262"/>
<dbReference type="eggNOG" id="COG1292">
    <property type="taxonomic scope" value="Bacteria"/>
</dbReference>
<dbReference type="HOGENOM" id="CLU_010118_4_1_11"/>
<dbReference type="OrthoDB" id="9775735at2"/>
<dbReference type="BioCyc" id="CORYNE:G18NG-11909-MONOMER"/>
<dbReference type="Proteomes" id="UP000000582">
    <property type="component" value="Chromosome"/>
</dbReference>
<dbReference type="GO" id="GO:0005886">
    <property type="term" value="C:plasma membrane"/>
    <property type="evidence" value="ECO:0007669"/>
    <property type="project" value="UniProtKB-SubCell"/>
</dbReference>
<dbReference type="GO" id="GO:0015293">
    <property type="term" value="F:symporter activity"/>
    <property type="evidence" value="ECO:0007669"/>
    <property type="project" value="UniProtKB-KW"/>
</dbReference>
<dbReference type="GO" id="GO:0006865">
    <property type="term" value="P:amino acid transport"/>
    <property type="evidence" value="ECO:0007669"/>
    <property type="project" value="UniProtKB-KW"/>
</dbReference>
<dbReference type="GO" id="GO:0006814">
    <property type="term" value="P:sodium ion transport"/>
    <property type="evidence" value="ECO:0007669"/>
    <property type="project" value="UniProtKB-KW"/>
</dbReference>
<dbReference type="InterPro" id="IPR000060">
    <property type="entry name" value="BCCT_transptr"/>
</dbReference>
<dbReference type="NCBIfam" id="TIGR00842">
    <property type="entry name" value="bcct"/>
    <property type="match status" value="1"/>
</dbReference>
<dbReference type="PANTHER" id="PTHR30047:SF7">
    <property type="entry name" value="HIGH-AFFINITY CHOLINE TRANSPORT PROTEIN"/>
    <property type="match status" value="1"/>
</dbReference>
<dbReference type="PANTHER" id="PTHR30047">
    <property type="entry name" value="HIGH-AFFINITY CHOLINE TRANSPORT PROTEIN-RELATED"/>
    <property type="match status" value="1"/>
</dbReference>
<dbReference type="Pfam" id="PF02028">
    <property type="entry name" value="BCCT"/>
    <property type="match status" value="1"/>
</dbReference>
<organism>
    <name type="scientific">Corynebacterium glutamicum (strain ATCC 13032 / DSM 20300 / JCM 1318 / BCRC 11384 / CCUG 27702 / LMG 3730 / NBRC 12168 / NCIMB 10025 / NRRL B-2784 / 534)</name>
    <dbReference type="NCBI Taxonomy" id="196627"/>
    <lineage>
        <taxon>Bacteria</taxon>
        <taxon>Bacillati</taxon>
        <taxon>Actinomycetota</taxon>
        <taxon>Actinomycetes</taxon>
        <taxon>Mycobacteriales</taxon>
        <taxon>Corynebacteriaceae</taxon>
        <taxon>Corynebacterium</taxon>
    </lineage>
</organism>
<reference key="1">
    <citation type="journal article" date="1998" name="J. Bacteriol.">
        <title>Corynebacterium glutamicum is equipped with four secondary carriers for compatible solutes: identification, sequencing, and characterization of the proline/ectoine uptake system, ProP, and the ectoine/proline/glycine betaine carrier, EctP.</title>
        <authorList>
            <person name="Peter H."/>
            <person name="Weil B."/>
            <person name="Burkovski A."/>
            <person name="Kramer R."/>
            <person name="Morbach S."/>
        </authorList>
    </citation>
    <scope>NUCLEOTIDE SEQUENCE [GENOMIC DNA]</scope>
    <scope>FUNCTION</scope>
    <scope>BIOPHYSICOCHEMICAL PROPERTIES</scope>
    <scope>INDUCTION</scope>
    <source>
        <strain>ATCC 13032 / DSM 20300 / JCM 1318 / BCRC 11384 / CCUG 27702 / LMG 3730 / NBRC 12168 / NCIMB 10025 / NRRL B-2784 / 534</strain>
    </source>
</reference>
<reference key="2">
    <citation type="journal article" date="2003" name="Appl. Microbiol. Biotechnol.">
        <title>The Corynebacterium glutamicum genome: features and impacts on biotechnological processes.</title>
        <authorList>
            <person name="Ikeda M."/>
            <person name="Nakagawa S."/>
        </authorList>
    </citation>
    <scope>NUCLEOTIDE SEQUENCE [LARGE SCALE GENOMIC DNA]</scope>
    <source>
        <strain>ATCC 13032 / DSM 20300 / JCM 1318 / BCRC 11384 / CCUG 27702 / LMG 3730 / NBRC 12168 / NCIMB 10025 / NRRL B-2784 / 534</strain>
    </source>
</reference>
<reference key="3">
    <citation type="journal article" date="2005" name="J. Bacteriol.">
        <title>Chill activation of compatible solute transporters in Corynebacterium glutamicum at the level of transport activity.</title>
        <authorList>
            <person name="Ozcan N."/>
            <person name="Kraemer R."/>
            <person name="Morbach S."/>
        </authorList>
    </citation>
    <scope>BIOPHYSICOCHEMICAL PROPERTIES</scope>
    <source>
        <strain>ATCC 13032 / DSM 20300 / JCM 1318 / BCRC 11384 / CCUG 27702 / LMG 3730 / NBRC 12168 / NCIMB 10025 / NRRL B-2784 / 534</strain>
    </source>
</reference>
<reference key="4">
    <citation type="journal article" date="2007" name="Appl. Microbiol. Biotechnol.">
        <title>Characterization of compatible solute transporter multiplicity in Corynebacterium glutamicum.</title>
        <authorList>
            <person name="Weinand M."/>
            <person name="Kraemer R."/>
            <person name="Morbach S."/>
        </authorList>
    </citation>
    <scope>INDUCTION</scope>
    <scope>SUBCELLULAR LOCATION</scope>
    <source>
        <strain>ATCC 13032 / DSM 20300 / JCM 1318 / BCRC 11384 / CCUG 27702 / LMG 3730 / NBRC 12168 / NCIMB 10025 / NRRL B-2784 / 534</strain>
    </source>
</reference>